<reference key="1">
    <citation type="journal article" date="2005" name="DNA Res.">
        <title>Complete genome sequence of the facultative anaerobic magnetotactic bacterium Magnetospirillum sp. strain AMB-1.</title>
        <authorList>
            <person name="Matsunaga T."/>
            <person name="Okamura Y."/>
            <person name="Fukuda Y."/>
            <person name="Wahyudi A.T."/>
            <person name="Murase Y."/>
            <person name="Takeyama H."/>
        </authorList>
    </citation>
    <scope>NUCLEOTIDE SEQUENCE [LARGE SCALE GENOMIC DNA]</scope>
    <source>
        <strain>ATCC 700264 / AMB-1</strain>
    </source>
</reference>
<name>RUVC_PARM1</name>
<protein>
    <recommendedName>
        <fullName evidence="1">Crossover junction endodeoxyribonuclease RuvC</fullName>
        <ecNumber evidence="1">3.1.21.10</ecNumber>
    </recommendedName>
    <alternativeName>
        <fullName evidence="1">Holliday junction nuclease RuvC</fullName>
    </alternativeName>
    <alternativeName>
        <fullName evidence="1">Holliday junction resolvase RuvC</fullName>
    </alternativeName>
</protein>
<sequence length="166" mass="17302">MRILGLDPGLRNTGWGIIDAVDNRLRHVADGVIRPDASAALAERLVQLHDGIMAVIADFSPDEAAVEETFVNMNPASTLKLGQARGVVLLVPAKSGLPVGEYAATLVKQSVVGTGRAAKEQVGMMVKTLLPGCLAATADAADALAVAICHAHHRGTQQKLARAVAR</sequence>
<dbReference type="EC" id="3.1.21.10" evidence="1"/>
<dbReference type="EMBL" id="AP007255">
    <property type="protein sequence ID" value="BAE52023.1"/>
    <property type="molecule type" value="Genomic_DNA"/>
</dbReference>
<dbReference type="RefSeq" id="WP_011385584.1">
    <property type="nucleotide sequence ID" value="NC_007626.1"/>
</dbReference>
<dbReference type="SMR" id="Q2W2A2"/>
<dbReference type="STRING" id="342108.amb3219"/>
<dbReference type="KEGG" id="mag:amb3219"/>
<dbReference type="HOGENOM" id="CLU_091257_1_0_5"/>
<dbReference type="OrthoDB" id="9805499at2"/>
<dbReference type="Proteomes" id="UP000007058">
    <property type="component" value="Chromosome"/>
</dbReference>
<dbReference type="GO" id="GO:0005737">
    <property type="term" value="C:cytoplasm"/>
    <property type="evidence" value="ECO:0007669"/>
    <property type="project" value="UniProtKB-SubCell"/>
</dbReference>
<dbReference type="GO" id="GO:0048476">
    <property type="term" value="C:Holliday junction resolvase complex"/>
    <property type="evidence" value="ECO:0007669"/>
    <property type="project" value="UniProtKB-UniRule"/>
</dbReference>
<dbReference type="GO" id="GO:0008821">
    <property type="term" value="F:crossover junction DNA endonuclease activity"/>
    <property type="evidence" value="ECO:0007669"/>
    <property type="project" value="UniProtKB-UniRule"/>
</dbReference>
<dbReference type="GO" id="GO:0003677">
    <property type="term" value="F:DNA binding"/>
    <property type="evidence" value="ECO:0007669"/>
    <property type="project" value="UniProtKB-KW"/>
</dbReference>
<dbReference type="GO" id="GO:0000287">
    <property type="term" value="F:magnesium ion binding"/>
    <property type="evidence" value="ECO:0007669"/>
    <property type="project" value="UniProtKB-UniRule"/>
</dbReference>
<dbReference type="GO" id="GO:0006310">
    <property type="term" value="P:DNA recombination"/>
    <property type="evidence" value="ECO:0007669"/>
    <property type="project" value="UniProtKB-UniRule"/>
</dbReference>
<dbReference type="GO" id="GO:0006281">
    <property type="term" value="P:DNA repair"/>
    <property type="evidence" value="ECO:0007669"/>
    <property type="project" value="UniProtKB-UniRule"/>
</dbReference>
<dbReference type="CDD" id="cd16962">
    <property type="entry name" value="RuvC"/>
    <property type="match status" value="1"/>
</dbReference>
<dbReference type="FunFam" id="3.30.420.10:FF:000002">
    <property type="entry name" value="Crossover junction endodeoxyribonuclease RuvC"/>
    <property type="match status" value="1"/>
</dbReference>
<dbReference type="Gene3D" id="3.30.420.10">
    <property type="entry name" value="Ribonuclease H-like superfamily/Ribonuclease H"/>
    <property type="match status" value="1"/>
</dbReference>
<dbReference type="HAMAP" id="MF_00034">
    <property type="entry name" value="RuvC"/>
    <property type="match status" value="1"/>
</dbReference>
<dbReference type="InterPro" id="IPR012337">
    <property type="entry name" value="RNaseH-like_sf"/>
</dbReference>
<dbReference type="InterPro" id="IPR036397">
    <property type="entry name" value="RNaseH_sf"/>
</dbReference>
<dbReference type="InterPro" id="IPR020563">
    <property type="entry name" value="X-over_junc_endoDNase_Mg_BS"/>
</dbReference>
<dbReference type="InterPro" id="IPR002176">
    <property type="entry name" value="X-over_junc_endoDNase_RuvC"/>
</dbReference>
<dbReference type="NCBIfam" id="TIGR00228">
    <property type="entry name" value="ruvC"/>
    <property type="match status" value="1"/>
</dbReference>
<dbReference type="PANTHER" id="PTHR30194">
    <property type="entry name" value="CROSSOVER JUNCTION ENDODEOXYRIBONUCLEASE RUVC"/>
    <property type="match status" value="1"/>
</dbReference>
<dbReference type="PANTHER" id="PTHR30194:SF3">
    <property type="entry name" value="CROSSOVER JUNCTION ENDODEOXYRIBONUCLEASE RUVC"/>
    <property type="match status" value="1"/>
</dbReference>
<dbReference type="Pfam" id="PF02075">
    <property type="entry name" value="RuvC"/>
    <property type="match status" value="1"/>
</dbReference>
<dbReference type="PRINTS" id="PR00696">
    <property type="entry name" value="RSOLVASERUVC"/>
</dbReference>
<dbReference type="SUPFAM" id="SSF53098">
    <property type="entry name" value="Ribonuclease H-like"/>
    <property type="match status" value="1"/>
</dbReference>
<dbReference type="PROSITE" id="PS01321">
    <property type="entry name" value="RUVC"/>
    <property type="match status" value="1"/>
</dbReference>
<organism>
    <name type="scientific">Paramagnetospirillum magneticum (strain ATCC 700264 / AMB-1)</name>
    <name type="common">Magnetospirillum magneticum</name>
    <dbReference type="NCBI Taxonomy" id="342108"/>
    <lineage>
        <taxon>Bacteria</taxon>
        <taxon>Pseudomonadati</taxon>
        <taxon>Pseudomonadota</taxon>
        <taxon>Alphaproteobacteria</taxon>
        <taxon>Rhodospirillales</taxon>
        <taxon>Magnetospirillaceae</taxon>
        <taxon>Paramagnetospirillum</taxon>
    </lineage>
</organism>
<gene>
    <name evidence="1" type="primary">ruvC</name>
    <name type="ordered locus">amb3219</name>
</gene>
<comment type="function">
    <text evidence="1">The RuvA-RuvB-RuvC complex processes Holliday junction (HJ) DNA during genetic recombination and DNA repair. Endonuclease that resolves HJ intermediates. Cleaves cruciform DNA by making single-stranded nicks across the HJ at symmetrical positions within the homologous arms, yielding a 5'-phosphate and a 3'-hydroxyl group; requires a central core of homology in the junction. The consensus cleavage sequence is 5'-(A/T)TT(C/G)-3'. Cleavage occurs on the 3'-side of the TT dinucleotide at the point of strand exchange. HJ branch migration catalyzed by RuvA-RuvB allows RuvC to scan DNA until it finds its consensus sequence, where it cleaves and resolves the cruciform DNA.</text>
</comment>
<comment type="catalytic activity">
    <reaction evidence="1">
        <text>Endonucleolytic cleavage at a junction such as a reciprocal single-stranded crossover between two homologous DNA duplexes (Holliday junction).</text>
        <dbReference type="EC" id="3.1.21.10"/>
    </reaction>
</comment>
<comment type="cofactor">
    <cofactor evidence="1">
        <name>Mg(2+)</name>
        <dbReference type="ChEBI" id="CHEBI:18420"/>
    </cofactor>
    <text evidence="1">Binds 2 Mg(2+) ion per subunit.</text>
</comment>
<comment type="subunit">
    <text evidence="1">Homodimer which binds Holliday junction (HJ) DNA. The HJ becomes 2-fold symmetrical on binding to RuvC with unstacked arms; it has a different conformation from HJ DNA in complex with RuvA. In the full resolvosome a probable DNA-RuvA(4)-RuvB(12)-RuvC(2) complex forms which resolves the HJ.</text>
</comment>
<comment type="subcellular location">
    <subcellularLocation>
        <location evidence="1">Cytoplasm</location>
    </subcellularLocation>
</comment>
<comment type="similarity">
    <text evidence="1">Belongs to the RuvC family.</text>
</comment>
<proteinExistence type="inferred from homology"/>
<accession>Q2W2A2</accession>
<feature type="chain" id="PRO_1000002773" description="Crossover junction endodeoxyribonuclease RuvC">
    <location>
        <begin position="1"/>
        <end position="166"/>
    </location>
</feature>
<feature type="active site" evidence="1">
    <location>
        <position position="7"/>
    </location>
</feature>
<feature type="active site" evidence="1">
    <location>
        <position position="67"/>
    </location>
</feature>
<feature type="active site" evidence="1">
    <location>
        <position position="139"/>
    </location>
</feature>
<feature type="binding site" evidence="1">
    <location>
        <position position="7"/>
    </location>
    <ligand>
        <name>Mg(2+)</name>
        <dbReference type="ChEBI" id="CHEBI:18420"/>
        <label>1</label>
    </ligand>
</feature>
<feature type="binding site" evidence="1">
    <location>
        <position position="67"/>
    </location>
    <ligand>
        <name>Mg(2+)</name>
        <dbReference type="ChEBI" id="CHEBI:18420"/>
        <label>2</label>
    </ligand>
</feature>
<feature type="binding site" evidence="1">
    <location>
        <position position="139"/>
    </location>
    <ligand>
        <name>Mg(2+)</name>
        <dbReference type="ChEBI" id="CHEBI:18420"/>
        <label>1</label>
    </ligand>
</feature>
<keyword id="KW-0963">Cytoplasm</keyword>
<keyword id="KW-0227">DNA damage</keyword>
<keyword id="KW-0233">DNA recombination</keyword>
<keyword id="KW-0234">DNA repair</keyword>
<keyword id="KW-0238">DNA-binding</keyword>
<keyword id="KW-0255">Endonuclease</keyword>
<keyword id="KW-0378">Hydrolase</keyword>
<keyword id="KW-0460">Magnesium</keyword>
<keyword id="KW-0479">Metal-binding</keyword>
<keyword id="KW-0540">Nuclease</keyword>
<evidence type="ECO:0000255" key="1">
    <source>
        <dbReference type="HAMAP-Rule" id="MF_00034"/>
    </source>
</evidence>